<organism>
    <name type="scientific">Caenorhabditis briggsae</name>
    <dbReference type="NCBI Taxonomy" id="6238"/>
    <lineage>
        <taxon>Eukaryota</taxon>
        <taxon>Metazoa</taxon>
        <taxon>Ecdysozoa</taxon>
        <taxon>Nematoda</taxon>
        <taxon>Chromadorea</taxon>
        <taxon>Rhabditida</taxon>
        <taxon>Rhabditina</taxon>
        <taxon>Rhabditomorpha</taxon>
        <taxon>Rhabditoidea</taxon>
        <taxon>Rhabditidae</taxon>
        <taxon>Peloderinae</taxon>
        <taxon>Caenorhabditis</taxon>
    </lineage>
</organism>
<dbReference type="EMBL" id="HE601284">
    <property type="protein sequence ID" value="CAP28712.1"/>
    <property type="molecule type" value="Genomic_DNA"/>
</dbReference>
<dbReference type="SMR" id="Q61L47"/>
<dbReference type="FunCoup" id="Q61L47">
    <property type="interactions" value="19"/>
</dbReference>
<dbReference type="STRING" id="6238.Q61L47"/>
<dbReference type="KEGG" id="cbr:CBG_09077"/>
<dbReference type="CTD" id="8583206"/>
<dbReference type="WormBase" id="CBG09077">
    <property type="protein sequence ID" value="CBP42767"/>
    <property type="gene ID" value="WBGene00030741"/>
    <property type="gene designation" value="Cbr-mdt-15"/>
</dbReference>
<dbReference type="eggNOG" id="KOG4274">
    <property type="taxonomic scope" value="Eukaryota"/>
</dbReference>
<dbReference type="HOGENOM" id="CLU_021554_0_0_1"/>
<dbReference type="InParanoid" id="Q61L47"/>
<dbReference type="OMA" id="CVSKDEY"/>
<dbReference type="Proteomes" id="UP000008549">
    <property type="component" value="Unassembled WGS sequence"/>
</dbReference>
<dbReference type="GO" id="GO:0005634">
    <property type="term" value="C:nucleus"/>
    <property type="evidence" value="ECO:0000318"/>
    <property type="project" value="GO_Central"/>
</dbReference>
<dbReference type="GO" id="GO:0003723">
    <property type="term" value="F:RNA binding"/>
    <property type="evidence" value="ECO:0000318"/>
    <property type="project" value="GO_Central"/>
</dbReference>
<dbReference type="GO" id="GO:0003712">
    <property type="term" value="F:transcription coregulator activity"/>
    <property type="evidence" value="ECO:0007669"/>
    <property type="project" value="InterPro"/>
</dbReference>
<dbReference type="GO" id="GO:0006355">
    <property type="term" value="P:regulation of DNA-templated transcription"/>
    <property type="evidence" value="ECO:0000318"/>
    <property type="project" value="GO_Central"/>
</dbReference>
<dbReference type="FunFam" id="1.10.246.20:FF:000006">
    <property type="entry name" value="Mediator of RNA polymerase II transcription subunit 15"/>
    <property type="match status" value="1"/>
</dbReference>
<dbReference type="Gene3D" id="1.10.246.20">
    <property type="entry name" value="Coactivator CBP, KIX domain"/>
    <property type="match status" value="1"/>
</dbReference>
<dbReference type="InterPro" id="IPR036529">
    <property type="entry name" value="KIX_dom_sf"/>
</dbReference>
<dbReference type="InterPro" id="IPR048386">
    <property type="entry name" value="Med15_C"/>
</dbReference>
<dbReference type="InterPro" id="IPR019087">
    <property type="entry name" value="Med15_N"/>
</dbReference>
<dbReference type="Pfam" id="PF21539">
    <property type="entry name" value="Med15_C"/>
    <property type="match status" value="1"/>
</dbReference>
<dbReference type="Pfam" id="PF09606">
    <property type="entry name" value="Med15_N"/>
    <property type="match status" value="1"/>
</dbReference>
<name>MED15_CAEBR</name>
<proteinExistence type="inferred from homology"/>
<gene>
    <name type="primary">mdt-15</name>
    <name type="ORF">CBG09077</name>
</gene>
<accession>Q61L47</accession>
<accession>A8X7V1</accession>
<feature type="chain" id="PRO_0000304669" description="Mediator of RNA polymerase II transcription subunit 15">
    <location>
        <begin position="1"/>
        <end position="785"/>
    </location>
</feature>
<feature type="region of interest" description="Disordered" evidence="2">
    <location>
        <begin position="101"/>
        <end position="140"/>
    </location>
</feature>
<feature type="region of interest" description="Disordered" evidence="2">
    <location>
        <begin position="161"/>
        <end position="228"/>
    </location>
</feature>
<feature type="region of interest" description="Disordered" evidence="2">
    <location>
        <begin position="249"/>
        <end position="311"/>
    </location>
</feature>
<feature type="region of interest" description="Disordered" evidence="2">
    <location>
        <begin position="323"/>
        <end position="363"/>
    </location>
</feature>
<feature type="region of interest" description="Disordered" evidence="2">
    <location>
        <begin position="575"/>
        <end position="602"/>
    </location>
</feature>
<feature type="compositionally biased region" description="Low complexity" evidence="2">
    <location>
        <begin position="122"/>
        <end position="140"/>
    </location>
</feature>
<feature type="compositionally biased region" description="Low complexity" evidence="2">
    <location>
        <begin position="174"/>
        <end position="189"/>
    </location>
</feature>
<feature type="compositionally biased region" description="Low complexity" evidence="2">
    <location>
        <begin position="279"/>
        <end position="291"/>
    </location>
</feature>
<feature type="compositionally biased region" description="Polar residues" evidence="2">
    <location>
        <begin position="301"/>
        <end position="311"/>
    </location>
</feature>
<feature type="compositionally biased region" description="Low complexity" evidence="2">
    <location>
        <begin position="333"/>
        <end position="343"/>
    </location>
</feature>
<feature type="compositionally biased region" description="Gly residues" evidence="2">
    <location>
        <begin position="344"/>
        <end position="356"/>
    </location>
</feature>
<feature type="compositionally biased region" description="Low complexity" evidence="2">
    <location>
        <begin position="584"/>
        <end position="598"/>
    </location>
</feature>
<protein>
    <recommendedName>
        <fullName>Mediator of RNA polymerase II transcription subunit 15</fullName>
    </recommendedName>
    <alternativeName>
        <fullName>Mediator complex subunit 15</fullName>
    </alternativeName>
</protein>
<reference key="1">
    <citation type="journal article" date="2003" name="PLoS Biol.">
        <title>The genome sequence of Caenorhabditis briggsae: a platform for comparative genomics.</title>
        <authorList>
            <person name="Stein L.D."/>
            <person name="Bao Z."/>
            <person name="Blasiar D."/>
            <person name="Blumenthal T."/>
            <person name="Brent M.R."/>
            <person name="Chen N."/>
            <person name="Chinwalla A."/>
            <person name="Clarke L."/>
            <person name="Clee C."/>
            <person name="Coghlan A."/>
            <person name="Coulson A."/>
            <person name="D'Eustachio P."/>
            <person name="Fitch D.H.A."/>
            <person name="Fulton L.A."/>
            <person name="Fulton R.E."/>
            <person name="Griffiths-Jones S."/>
            <person name="Harris T.W."/>
            <person name="Hillier L.W."/>
            <person name="Kamath R."/>
            <person name="Kuwabara P.E."/>
            <person name="Mardis E.R."/>
            <person name="Marra M.A."/>
            <person name="Miner T.L."/>
            <person name="Minx P."/>
            <person name="Mullikin J.C."/>
            <person name="Plumb R.W."/>
            <person name="Rogers J."/>
            <person name="Schein J.E."/>
            <person name="Sohrmann M."/>
            <person name="Spieth J."/>
            <person name="Stajich J.E."/>
            <person name="Wei C."/>
            <person name="Willey D."/>
            <person name="Wilson R.K."/>
            <person name="Durbin R.M."/>
            <person name="Waterston R.H."/>
        </authorList>
    </citation>
    <scope>NUCLEOTIDE SEQUENCE [LARGE SCALE GENOMIC DNA]</scope>
    <source>
        <strain>AF16</strain>
    </source>
</reference>
<comment type="function">
    <text evidence="1">Component of the Mediator complex, a coactivator involved in the regulated transcription of nearly all RNA polymerase II-dependent genes. Mediator functions as a bridge to convey information from gene-specific regulatory proteins to the basal RNA polymerase II transcription machinery. Mediator is recruited to promoters by direct interactions with regulatory proteins and serves as a scaffold for the assembly of a functional preinitiation complex with RNA polymerase II and the general transcription factors (By similarity). Required for activated transcription of the MtnA, MtnB and MtnD genes.</text>
</comment>
<comment type="subunit">
    <text evidence="1">Component of the Mediator complex.</text>
</comment>
<comment type="subcellular location">
    <subcellularLocation>
        <location evidence="1">Nucleus</location>
    </subcellularLocation>
</comment>
<comment type="similarity">
    <text evidence="3">Belongs to the Mediator complex subunit 15 family.</text>
</comment>
<keyword id="KW-0010">Activator</keyword>
<keyword id="KW-0539">Nucleus</keyword>
<keyword id="KW-1185">Reference proteome</keyword>
<keyword id="KW-0804">Transcription</keyword>
<keyword id="KW-0805">Transcription regulation</keyword>
<sequence>MSEEDWPSPKFREHVIQRLEPELARNRQNAPNLPVPGDARQVEEYVFAKCMSKDEYMRTIAKVINAINCNSKSAAVPSVLQPSQFHSPPCTTAVLGTGVGTPGYRAPVPPDPQPTSAQARNPPVTTATTQASTTPSAPAVTGTVSASAAVAAAVASFPSPDSAALRAAPGGQTTPGSQPSSGAPGSTTPNAPFPNGAGAQPGAPTMNGGAGGPPMGQPPPQMGAPNMGMNGPGGYGGYGMMNGPPGAGGPMGGNPYGQPMKKEMDQSRGPWDPQGHMYQQQQPWGGMPPQQGHGGYPNRPMNGQQTTPTGTSSVLESLINQPQQYPGHHNQMAPPGGDRNAAGGRAGVPGNPGGVPGAPQRPGAMPVNQGVMSIEDQNVYQMKLRNMRGSCDSLRTRARQCRQEGNHEAAHKLEVMLSVLEGRRVVSLEYLNHLETWIARKQDFLNINPMGGGNPGHMGMNDPVMNGDHGMMSNGQVHNPYGHPGYNHGQYGMGGPPPPHHMQMHQQQMWQQPQQQRMMPTDPMMMGGGGPMHGGPMYRGDMGHEMNSPVNSHRHNPYPSPAAMRNNMRGMQNGPGPIGRDRNSMSGSMSGPSSGAPSLNTMGTPKMGAPGSIGGLSNLDDFTYDDFLPNPIDALQPTLHIGPGSSMGGGPRVNLNDAARKELQAMEGRFEIEPNHQRHDANHIIVSAKMRNQPVPPLRLVVPITYPSGNVTVDRTAIDLDAYLYDDLQNVVHERLSRPGLSSLTDYLNAWEEQVNQYMQQNQTNGGMDAAFGVGNDFFYDNLNL</sequence>
<evidence type="ECO:0000250" key="1"/>
<evidence type="ECO:0000256" key="2">
    <source>
        <dbReference type="SAM" id="MobiDB-lite"/>
    </source>
</evidence>
<evidence type="ECO:0000305" key="3"/>